<dbReference type="EMBL" id="CP000828">
    <property type="protein sequence ID" value="ABW27920.1"/>
    <property type="molecule type" value="Genomic_DNA"/>
</dbReference>
<dbReference type="RefSeq" id="WP_010478653.1">
    <property type="nucleotide sequence ID" value="NC_009925.1"/>
</dbReference>
<dbReference type="SMR" id="B0CBD5"/>
<dbReference type="STRING" id="329726.AM1_2922"/>
<dbReference type="KEGG" id="amr:AM1_2922"/>
<dbReference type="eggNOG" id="ENOG503137T">
    <property type="taxonomic scope" value="Bacteria"/>
</dbReference>
<dbReference type="HOGENOM" id="CLU_132693_1_0_3"/>
<dbReference type="OrthoDB" id="486850at2"/>
<dbReference type="Proteomes" id="UP000000268">
    <property type="component" value="Chromosome"/>
</dbReference>
<dbReference type="GO" id="GO:1990904">
    <property type="term" value="C:ribonucleoprotein complex"/>
    <property type="evidence" value="ECO:0007669"/>
    <property type="project" value="UniProtKB-KW"/>
</dbReference>
<dbReference type="GO" id="GO:0005840">
    <property type="term" value="C:ribosome"/>
    <property type="evidence" value="ECO:0007669"/>
    <property type="project" value="UniProtKB-KW"/>
</dbReference>
<dbReference type="GO" id="GO:0003735">
    <property type="term" value="F:structural constituent of ribosome"/>
    <property type="evidence" value="ECO:0007669"/>
    <property type="project" value="InterPro"/>
</dbReference>
<dbReference type="GO" id="GO:0006412">
    <property type="term" value="P:translation"/>
    <property type="evidence" value="ECO:0007669"/>
    <property type="project" value="UniProtKB-UniRule"/>
</dbReference>
<dbReference type="Gene3D" id="3.30.390.140">
    <property type="match status" value="1"/>
</dbReference>
<dbReference type="HAMAP" id="MF_00619">
    <property type="entry name" value="Ribosomal_plastid_cS23"/>
    <property type="match status" value="1"/>
</dbReference>
<dbReference type="InterPro" id="IPR038447">
    <property type="entry name" value="PSRP-3/Ycf65_sf"/>
</dbReference>
<dbReference type="InterPro" id="IPR006924">
    <property type="entry name" value="Ribosomal_PSRP3/Ycf65"/>
</dbReference>
<dbReference type="NCBIfam" id="NF002740">
    <property type="entry name" value="PRK02724.1"/>
    <property type="match status" value="1"/>
</dbReference>
<dbReference type="PANTHER" id="PTHR35108">
    <property type="entry name" value="30S RIBOSOMAL PROTEIN 3, CHLOROPLASTIC"/>
    <property type="match status" value="1"/>
</dbReference>
<dbReference type="PANTHER" id="PTHR35108:SF1">
    <property type="entry name" value="OS04G0461100 PROTEIN"/>
    <property type="match status" value="1"/>
</dbReference>
<dbReference type="Pfam" id="PF04839">
    <property type="entry name" value="PSRP-3_Ycf65"/>
    <property type="match status" value="1"/>
</dbReference>
<evidence type="ECO:0000255" key="1">
    <source>
        <dbReference type="HAMAP-Rule" id="MF_00619"/>
    </source>
</evidence>
<gene>
    <name type="ordered locus">AM1_2922</name>
</gene>
<feature type="chain" id="PRO_1000082584" description="Probable small ribosomal subunit protein cS23">
    <location>
        <begin position="1"/>
        <end position="99"/>
    </location>
</feature>
<keyword id="KW-1185">Reference proteome</keyword>
<keyword id="KW-0687">Ribonucleoprotein</keyword>
<keyword id="KW-0689">Ribosomal protein</keyword>
<comment type="function">
    <text evidence="1">Probably a ribosomal protein or a ribosome-associated protein.</text>
</comment>
<comment type="subunit">
    <text evidence="1">Part of the 30S ribosomal subunit.</text>
</comment>
<comment type="similarity">
    <text evidence="1">Belongs to the chloroplast-specific ribosomal protein cS23 family.</text>
</comment>
<name>RRP3_ACAM1</name>
<protein>
    <recommendedName>
        <fullName evidence="1">Probable small ribosomal subunit protein cS23</fullName>
    </recommendedName>
    <alternativeName>
        <fullName>Probable 30S ribosomal protein PSRP-3</fullName>
    </alternativeName>
    <alternativeName>
        <fullName>Ycf65-like protein</fullName>
    </alternativeName>
</protein>
<organism>
    <name type="scientific">Acaryochloris marina (strain MBIC 11017)</name>
    <dbReference type="NCBI Taxonomy" id="329726"/>
    <lineage>
        <taxon>Bacteria</taxon>
        <taxon>Bacillati</taxon>
        <taxon>Cyanobacteriota</taxon>
        <taxon>Cyanophyceae</taxon>
        <taxon>Acaryochloridales</taxon>
        <taxon>Acaryochloridaceae</taxon>
        <taxon>Acaryochloris</taxon>
    </lineage>
</organism>
<sequence>MSKFILKVLWLDENVALAVDQVVGNGSSPLTSYFFWPRNDAWENLKTELEKKTWIDEVERISILNKATEVINYWQEEGRRRPLTEAKARFPEVVFTGTA</sequence>
<proteinExistence type="inferred from homology"/>
<accession>B0CBD5</accession>
<reference key="1">
    <citation type="journal article" date="2008" name="Proc. Natl. Acad. Sci. U.S.A.">
        <title>Niche adaptation and genome expansion in the chlorophyll d-producing cyanobacterium Acaryochloris marina.</title>
        <authorList>
            <person name="Swingley W.D."/>
            <person name="Chen M."/>
            <person name="Cheung P.C."/>
            <person name="Conrad A.L."/>
            <person name="Dejesa L.C."/>
            <person name="Hao J."/>
            <person name="Honchak B.M."/>
            <person name="Karbach L.E."/>
            <person name="Kurdoglu A."/>
            <person name="Lahiri S."/>
            <person name="Mastrian S.D."/>
            <person name="Miyashita H."/>
            <person name="Page L."/>
            <person name="Ramakrishna P."/>
            <person name="Satoh S."/>
            <person name="Sattley W.M."/>
            <person name="Shimada Y."/>
            <person name="Taylor H.L."/>
            <person name="Tomo T."/>
            <person name="Tsuchiya T."/>
            <person name="Wang Z.T."/>
            <person name="Raymond J."/>
            <person name="Mimuro M."/>
            <person name="Blankenship R.E."/>
            <person name="Touchman J.W."/>
        </authorList>
    </citation>
    <scope>NUCLEOTIDE SEQUENCE [LARGE SCALE GENOMIC DNA]</scope>
    <source>
        <strain>MBIC 11017</strain>
    </source>
</reference>